<proteinExistence type="inferred from homology"/>
<evidence type="ECO:0000255" key="1">
    <source>
        <dbReference type="HAMAP-Rule" id="MF_00373"/>
    </source>
</evidence>
<evidence type="ECO:0000305" key="2"/>
<protein>
    <recommendedName>
        <fullName evidence="1">Large ribosomal subunit protein bL28</fullName>
    </recommendedName>
    <alternativeName>
        <fullName evidence="2">50S ribosomal protein L28</fullName>
    </alternativeName>
</protein>
<comment type="similarity">
    <text evidence="1">Belongs to the bacterial ribosomal protein bL28 family.</text>
</comment>
<feature type="chain" id="PRO_1000079836" description="Large ribosomal subunit protein bL28">
    <location>
        <begin position="1"/>
        <end position="78"/>
    </location>
</feature>
<sequence>MGKKCQLTGKKANNAFAVSHSHRRTHKLQEANLQWKRVWWPQEKRWVKLRLSTKAIKTLEKKGLAAFAREAGINLNQV</sequence>
<keyword id="KW-1185">Reference proteome</keyword>
<keyword id="KW-0687">Ribonucleoprotein</keyword>
<keyword id="KW-0689">Ribosomal protein</keyword>
<name>RL28_ACAM1</name>
<reference key="1">
    <citation type="journal article" date="2008" name="Proc. Natl. Acad. Sci. U.S.A.">
        <title>Niche adaptation and genome expansion in the chlorophyll d-producing cyanobacterium Acaryochloris marina.</title>
        <authorList>
            <person name="Swingley W.D."/>
            <person name="Chen M."/>
            <person name="Cheung P.C."/>
            <person name="Conrad A.L."/>
            <person name="Dejesa L.C."/>
            <person name="Hao J."/>
            <person name="Honchak B.M."/>
            <person name="Karbach L.E."/>
            <person name="Kurdoglu A."/>
            <person name="Lahiri S."/>
            <person name="Mastrian S.D."/>
            <person name="Miyashita H."/>
            <person name="Page L."/>
            <person name="Ramakrishna P."/>
            <person name="Satoh S."/>
            <person name="Sattley W.M."/>
            <person name="Shimada Y."/>
            <person name="Taylor H.L."/>
            <person name="Tomo T."/>
            <person name="Tsuchiya T."/>
            <person name="Wang Z.T."/>
            <person name="Raymond J."/>
            <person name="Mimuro M."/>
            <person name="Blankenship R.E."/>
            <person name="Touchman J.W."/>
        </authorList>
    </citation>
    <scope>NUCLEOTIDE SEQUENCE [LARGE SCALE GENOMIC DNA]</scope>
    <source>
        <strain>MBIC 11017</strain>
    </source>
</reference>
<gene>
    <name evidence="1" type="primary">rpmB</name>
    <name evidence="1" type="synonym">rpl28</name>
    <name type="ordered locus">AM1_2695</name>
</gene>
<dbReference type="EMBL" id="CP000828">
    <property type="protein sequence ID" value="ABW27695.1"/>
    <property type="molecule type" value="Genomic_DNA"/>
</dbReference>
<dbReference type="RefSeq" id="WP_010473270.1">
    <property type="nucleotide sequence ID" value="NC_009925.1"/>
</dbReference>
<dbReference type="SMR" id="B0C811"/>
<dbReference type="STRING" id="329726.AM1_2695"/>
<dbReference type="KEGG" id="amr:AM1_2695"/>
<dbReference type="eggNOG" id="COG0227">
    <property type="taxonomic scope" value="Bacteria"/>
</dbReference>
<dbReference type="HOGENOM" id="CLU_064548_3_0_3"/>
<dbReference type="OrthoDB" id="9805609at2"/>
<dbReference type="Proteomes" id="UP000000268">
    <property type="component" value="Chromosome"/>
</dbReference>
<dbReference type="GO" id="GO:1990904">
    <property type="term" value="C:ribonucleoprotein complex"/>
    <property type="evidence" value="ECO:0007669"/>
    <property type="project" value="UniProtKB-KW"/>
</dbReference>
<dbReference type="GO" id="GO:0005840">
    <property type="term" value="C:ribosome"/>
    <property type="evidence" value="ECO:0007669"/>
    <property type="project" value="UniProtKB-KW"/>
</dbReference>
<dbReference type="GO" id="GO:0003735">
    <property type="term" value="F:structural constituent of ribosome"/>
    <property type="evidence" value="ECO:0007669"/>
    <property type="project" value="InterPro"/>
</dbReference>
<dbReference type="GO" id="GO:0006412">
    <property type="term" value="P:translation"/>
    <property type="evidence" value="ECO:0007669"/>
    <property type="project" value="UniProtKB-UniRule"/>
</dbReference>
<dbReference type="Gene3D" id="2.30.170.40">
    <property type="entry name" value="Ribosomal protein L28/L24"/>
    <property type="match status" value="1"/>
</dbReference>
<dbReference type="HAMAP" id="MF_00373">
    <property type="entry name" value="Ribosomal_bL28"/>
    <property type="match status" value="1"/>
</dbReference>
<dbReference type="InterPro" id="IPR026569">
    <property type="entry name" value="Ribosomal_bL28"/>
</dbReference>
<dbReference type="InterPro" id="IPR034704">
    <property type="entry name" value="Ribosomal_bL28/bL31-like_sf"/>
</dbReference>
<dbReference type="InterPro" id="IPR001383">
    <property type="entry name" value="Ribosomal_bL28_bact-type"/>
</dbReference>
<dbReference type="InterPro" id="IPR037147">
    <property type="entry name" value="Ribosomal_bL28_sf"/>
</dbReference>
<dbReference type="NCBIfam" id="TIGR00009">
    <property type="entry name" value="L28"/>
    <property type="match status" value="1"/>
</dbReference>
<dbReference type="PANTHER" id="PTHR13528">
    <property type="entry name" value="39S RIBOSOMAL PROTEIN L28, MITOCHONDRIAL"/>
    <property type="match status" value="1"/>
</dbReference>
<dbReference type="PANTHER" id="PTHR13528:SF2">
    <property type="entry name" value="LARGE RIBOSOMAL SUBUNIT PROTEIN BL28M"/>
    <property type="match status" value="1"/>
</dbReference>
<dbReference type="Pfam" id="PF00830">
    <property type="entry name" value="Ribosomal_L28"/>
    <property type="match status" value="1"/>
</dbReference>
<dbReference type="SUPFAM" id="SSF143800">
    <property type="entry name" value="L28p-like"/>
    <property type="match status" value="1"/>
</dbReference>
<organism>
    <name type="scientific">Acaryochloris marina (strain MBIC 11017)</name>
    <dbReference type="NCBI Taxonomy" id="329726"/>
    <lineage>
        <taxon>Bacteria</taxon>
        <taxon>Bacillati</taxon>
        <taxon>Cyanobacteriota</taxon>
        <taxon>Cyanophyceae</taxon>
        <taxon>Acaryochloridales</taxon>
        <taxon>Acaryochloridaceae</taxon>
        <taxon>Acaryochloris</taxon>
    </lineage>
</organism>
<accession>B0C811</accession>